<name>Y5224_ARATH</name>
<feature type="initiator methionine" description="Removed" evidence="3">
    <location>
        <position position="1"/>
    </location>
</feature>
<feature type="chain" id="PRO_0000183268" description="Uncharacterized protein At5g02240">
    <location>
        <begin position="2"/>
        <end position="253"/>
    </location>
</feature>
<feature type="modified residue" description="N-acetylalanine" evidence="3">
    <location>
        <position position="2"/>
    </location>
</feature>
<feature type="strand" evidence="4">
    <location>
        <begin position="6"/>
        <end position="11"/>
    </location>
</feature>
<feature type="helix" evidence="4">
    <location>
        <begin position="15"/>
        <end position="26"/>
    </location>
</feature>
<feature type="turn" evidence="4">
    <location>
        <begin position="27"/>
        <end position="30"/>
    </location>
</feature>
<feature type="strand" evidence="4">
    <location>
        <begin position="32"/>
        <end position="38"/>
    </location>
</feature>
<feature type="helix" evidence="4">
    <location>
        <begin position="40"/>
        <end position="45"/>
    </location>
</feature>
<feature type="strand" evidence="4">
    <location>
        <begin position="52"/>
        <end position="54"/>
    </location>
</feature>
<feature type="helix" evidence="4">
    <location>
        <begin position="60"/>
        <end position="67"/>
    </location>
</feature>
<feature type="strand" evidence="4">
    <location>
        <begin position="71"/>
        <end position="75"/>
    </location>
</feature>
<feature type="helix" evidence="4">
    <location>
        <begin position="105"/>
        <end position="108"/>
    </location>
</feature>
<feature type="helix" evidence="4">
    <location>
        <begin position="111"/>
        <end position="123"/>
    </location>
</feature>
<feature type="strand" evidence="4">
    <location>
        <begin position="126"/>
        <end position="133"/>
    </location>
</feature>
<feature type="turn" evidence="4">
    <location>
        <begin position="134"/>
        <end position="137"/>
    </location>
</feature>
<feature type="helix" evidence="4">
    <location>
        <begin position="142"/>
        <end position="148"/>
    </location>
</feature>
<feature type="helix" evidence="4">
    <location>
        <begin position="151"/>
        <end position="163"/>
    </location>
</feature>
<feature type="strand" evidence="4">
    <location>
        <begin position="165"/>
        <end position="167"/>
    </location>
</feature>
<feature type="strand" evidence="4">
    <location>
        <begin position="169"/>
        <end position="174"/>
    </location>
</feature>
<feature type="strand" evidence="4">
    <location>
        <begin position="176"/>
        <end position="178"/>
    </location>
</feature>
<feature type="strand" evidence="4">
    <location>
        <begin position="182"/>
        <end position="185"/>
    </location>
</feature>
<feature type="strand" evidence="4">
    <location>
        <begin position="187"/>
        <end position="191"/>
    </location>
</feature>
<feature type="helix" evidence="4">
    <location>
        <begin position="194"/>
        <end position="197"/>
    </location>
</feature>
<feature type="strand" evidence="4">
    <location>
        <begin position="202"/>
        <end position="204"/>
    </location>
</feature>
<feature type="helix" evidence="4">
    <location>
        <begin position="205"/>
        <end position="215"/>
    </location>
</feature>
<feature type="helix" evidence="4">
    <location>
        <begin position="219"/>
        <end position="221"/>
    </location>
</feature>
<feature type="strand" evidence="4">
    <location>
        <begin position="224"/>
        <end position="230"/>
    </location>
</feature>
<feature type="turn" evidence="4">
    <location>
        <begin position="233"/>
        <end position="235"/>
    </location>
</feature>
<feature type="helix" evidence="4">
    <location>
        <begin position="242"/>
        <end position="247"/>
    </location>
</feature>
<protein>
    <recommendedName>
        <fullName>Uncharacterized protein At5g02240</fullName>
    </recommendedName>
</protein>
<keyword id="KW-0002">3D-structure</keyword>
<keyword id="KW-0007">Acetylation</keyword>
<keyword id="KW-1185">Reference proteome</keyword>
<reference key="1">
    <citation type="journal article" date="2000" name="Nature">
        <title>Sequence and analysis of chromosome 5 of the plant Arabidopsis thaliana.</title>
        <authorList>
            <person name="Tabata S."/>
            <person name="Kaneko T."/>
            <person name="Nakamura Y."/>
            <person name="Kotani H."/>
            <person name="Kato T."/>
            <person name="Asamizu E."/>
            <person name="Miyajima N."/>
            <person name="Sasamoto S."/>
            <person name="Kimura T."/>
            <person name="Hosouchi T."/>
            <person name="Kawashima K."/>
            <person name="Kohara M."/>
            <person name="Matsumoto M."/>
            <person name="Matsuno A."/>
            <person name="Muraki A."/>
            <person name="Nakayama S."/>
            <person name="Nakazaki N."/>
            <person name="Naruo K."/>
            <person name="Okumura S."/>
            <person name="Shinpo S."/>
            <person name="Takeuchi C."/>
            <person name="Wada T."/>
            <person name="Watanabe A."/>
            <person name="Yamada M."/>
            <person name="Yasuda M."/>
            <person name="Sato S."/>
            <person name="de la Bastide M."/>
            <person name="Huang E."/>
            <person name="Spiegel L."/>
            <person name="Gnoj L."/>
            <person name="O'Shaughnessy A."/>
            <person name="Preston R."/>
            <person name="Habermann K."/>
            <person name="Murray J."/>
            <person name="Johnson D."/>
            <person name="Rohlfing T."/>
            <person name="Nelson J."/>
            <person name="Stoneking T."/>
            <person name="Pepin K."/>
            <person name="Spieth J."/>
            <person name="Sekhon M."/>
            <person name="Armstrong J."/>
            <person name="Becker M."/>
            <person name="Belter E."/>
            <person name="Cordum H."/>
            <person name="Cordes M."/>
            <person name="Courtney L."/>
            <person name="Courtney W."/>
            <person name="Dante M."/>
            <person name="Du H."/>
            <person name="Edwards J."/>
            <person name="Fryman J."/>
            <person name="Haakensen B."/>
            <person name="Lamar E."/>
            <person name="Latreille P."/>
            <person name="Leonard S."/>
            <person name="Meyer R."/>
            <person name="Mulvaney E."/>
            <person name="Ozersky P."/>
            <person name="Riley A."/>
            <person name="Strowmatt C."/>
            <person name="Wagner-McPherson C."/>
            <person name="Wollam A."/>
            <person name="Yoakum M."/>
            <person name="Bell M."/>
            <person name="Dedhia N."/>
            <person name="Parnell L."/>
            <person name="Shah R."/>
            <person name="Rodriguez M."/>
            <person name="Hoon See L."/>
            <person name="Vil D."/>
            <person name="Baker J."/>
            <person name="Kirchoff K."/>
            <person name="Toth K."/>
            <person name="King L."/>
            <person name="Bahret A."/>
            <person name="Miller B."/>
            <person name="Marra M.A."/>
            <person name="Martienssen R."/>
            <person name="McCombie W.R."/>
            <person name="Wilson R.K."/>
            <person name="Murphy G."/>
            <person name="Bancroft I."/>
            <person name="Volckaert G."/>
            <person name="Wambutt R."/>
            <person name="Duesterhoeft A."/>
            <person name="Stiekema W."/>
            <person name="Pohl T."/>
            <person name="Entian K.-D."/>
            <person name="Terryn N."/>
            <person name="Hartley N."/>
            <person name="Bent E."/>
            <person name="Johnson S."/>
            <person name="Langham S.-A."/>
            <person name="McCullagh B."/>
            <person name="Robben J."/>
            <person name="Grymonprez B."/>
            <person name="Zimmermann W."/>
            <person name="Ramsperger U."/>
            <person name="Wedler H."/>
            <person name="Balke K."/>
            <person name="Wedler E."/>
            <person name="Peters S."/>
            <person name="van Staveren M."/>
            <person name="Dirkse W."/>
            <person name="Mooijman P."/>
            <person name="Klein Lankhorst R."/>
            <person name="Weitzenegger T."/>
            <person name="Bothe G."/>
            <person name="Rose M."/>
            <person name="Hauf J."/>
            <person name="Berneiser S."/>
            <person name="Hempel S."/>
            <person name="Feldpausch M."/>
            <person name="Lamberth S."/>
            <person name="Villarroel R."/>
            <person name="Gielen J."/>
            <person name="Ardiles W."/>
            <person name="Bents O."/>
            <person name="Lemcke K."/>
            <person name="Kolesov G."/>
            <person name="Mayer K.F.X."/>
            <person name="Rudd S."/>
            <person name="Schoof H."/>
            <person name="Schueller C."/>
            <person name="Zaccaria P."/>
            <person name="Mewes H.-W."/>
            <person name="Bevan M."/>
            <person name="Fransz P.F."/>
        </authorList>
    </citation>
    <scope>NUCLEOTIDE SEQUENCE [LARGE SCALE GENOMIC DNA]</scope>
    <source>
        <strain>cv. Columbia</strain>
    </source>
</reference>
<reference key="2">
    <citation type="journal article" date="2017" name="Plant J.">
        <title>Araport11: a complete reannotation of the Arabidopsis thaliana reference genome.</title>
        <authorList>
            <person name="Cheng C.Y."/>
            <person name="Krishnakumar V."/>
            <person name="Chan A.P."/>
            <person name="Thibaud-Nissen F."/>
            <person name="Schobel S."/>
            <person name="Town C.D."/>
        </authorList>
    </citation>
    <scope>GENOME REANNOTATION</scope>
    <source>
        <strain>cv. Columbia</strain>
    </source>
</reference>
<reference key="3">
    <citation type="journal article" date="2003" name="Science">
        <title>Empirical analysis of transcriptional activity in the Arabidopsis genome.</title>
        <authorList>
            <person name="Yamada K."/>
            <person name="Lim J."/>
            <person name="Dale J.M."/>
            <person name="Chen H."/>
            <person name="Shinn P."/>
            <person name="Palm C.J."/>
            <person name="Southwick A.M."/>
            <person name="Wu H.C."/>
            <person name="Kim C.J."/>
            <person name="Nguyen M."/>
            <person name="Pham P.K."/>
            <person name="Cheuk R.F."/>
            <person name="Karlin-Newmann G."/>
            <person name="Liu S.X."/>
            <person name="Lam B."/>
            <person name="Sakano H."/>
            <person name="Wu T."/>
            <person name="Yu G."/>
            <person name="Miranda M."/>
            <person name="Quach H.L."/>
            <person name="Tripp M."/>
            <person name="Chang C.H."/>
            <person name="Lee J.M."/>
            <person name="Toriumi M.J."/>
            <person name="Chan M.M."/>
            <person name="Tang C.C."/>
            <person name="Onodera C.S."/>
            <person name="Deng J.M."/>
            <person name="Akiyama K."/>
            <person name="Ansari Y."/>
            <person name="Arakawa T."/>
            <person name="Banh J."/>
            <person name="Banno F."/>
            <person name="Bowser L."/>
            <person name="Brooks S.Y."/>
            <person name="Carninci P."/>
            <person name="Chao Q."/>
            <person name="Choy N."/>
            <person name="Enju A."/>
            <person name="Goldsmith A.D."/>
            <person name="Gurjal M."/>
            <person name="Hansen N.F."/>
            <person name="Hayashizaki Y."/>
            <person name="Johnson-Hopson C."/>
            <person name="Hsuan V.W."/>
            <person name="Iida K."/>
            <person name="Karnes M."/>
            <person name="Khan S."/>
            <person name="Koesema E."/>
            <person name="Ishida J."/>
            <person name="Jiang P.X."/>
            <person name="Jones T."/>
            <person name="Kawai J."/>
            <person name="Kamiya A."/>
            <person name="Meyers C."/>
            <person name="Nakajima M."/>
            <person name="Narusaka M."/>
            <person name="Seki M."/>
            <person name="Sakurai T."/>
            <person name="Satou M."/>
            <person name="Tamse R."/>
            <person name="Vaysberg M."/>
            <person name="Wallender E.K."/>
            <person name="Wong C."/>
            <person name="Yamamura Y."/>
            <person name="Yuan S."/>
            <person name="Shinozaki K."/>
            <person name="Davis R.W."/>
            <person name="Theologis A."/>
            <person name="Ecker J.R."/>
        </authorList>
    </citation>
    <scope>NUCLEOTIDE SEQUENCE [LARGE SCALE MRNA]</scope>
    <source>
        <strain>cv. Columbia</strain>
    </source>
</reference>
<reference key="4">
    <citation type="submission" date="2005-03" db="EMBL/GenBank/DDBJ databases">
        <title>Large-scale analysis of RIKEN Arabidopsis full-length (RAFL) cDNAs.</title>
        <authorList>
            <person name="Totoki Y."/>
            <person name="Seki M."/>
            <person name="Ishida J."/>
            <person name="Nakajima M."/>
            <person name="Enju A."/>
            <person name="Kamiya A."/>
            <person name="Narusaka M."/>
            <person name="Shin-i T."/>
            <person name="Nakagawa M."/>
            <person name="Sakamoto N."/>
            <person name="Oishi K."/>
            <person name="Kohara Y."/>
            <person name="Kobayashi M."/>
            <person name="Toyoda A."/>
            <person name="Sakaki Y."/>
            <person name="Sakurai T."/>
            <person name="Iida K."/>
            <person name="Akiyama K."/>
            <person name="Satou M."/>
            <person name="Toyoda T."/>
            <person name="Konagaya A."/>
            <person name="Carninci P."/>
            <person name="Kawai J."/>
            <person name="Hayashizaki Y."/>
            <person name="Shinozaki K."/>
        </authorList>
    </citation>
    <scope>NUCLEOTIDE SEQUENCE [LARGE SCALE MRNA]</scope>
    <source>
        <strain>cv. Columbia</strain>
    </source>
</reference>
<reference key="5">
    <citation type="journal article" date="2012" name="Mol. Cell. Proteomics">
        <title>Comparative large-scale characterisation of plant vs. mammal proteins reveals similar and idiosyncratic N-alpha acetylation features.</title>
        <authorList>
            <person name="Bienvenut W.V."/>
            <person name="Sumpton D."/>
            <person name="Martinez A."/>
            <person name="Lilla S."/>
            <person name="Espagne C."/>
            <person name="Meinnel T."/>
            <person name="Giglione C."/>
        </authorList>
    </citation>
    <scope>ACETYLATION [LARGE SCALE ANALYSIS] AT ALA-2</scope>
    <scope>CLEAVAGE OF INITIATOR METHIONINE [LARGE SCALE ANALYSIS]</scope>
    <scope>IDENTIFICATION BY MASS SPECTROMETRY [LARGE SCALE ANALYSIS]</scope>
</reference>
<reference key="6">
    <citation type="submission" date="2005-02" db="PDB data bank">
        <title>X-ray structure of gene product from Arabidopsis thaliana At5g02240.</title>
        <authorList>
            <consortium name="Center for eukaryotic structural genomics (CESG)"/>
        </authorList>
    </citation>
    <scope>X-RAY CRYSTALLOGRAPHY (1.8 ANGSTROMS) OF 2-253</scope>
    <scope>SUBUNIT</scope>
</reference>
<sequence>MANLPTVLVTGASGRTGQIVYKKLKEGSDKFVAKGLVRSAQGKEKIGGEADVFIGDITDADSINPAFQGIDALVILTSAVPKMKPGFDPTKGGRPEFIFEDGQYPEQVDWIGQKNQIDAAKVAGVKHIVVVGSMGGTNPDHPLNKLGNGNILVWKRKAEQYLADSGTPYTIIRAGGLLDKEGGVRELLVGKDDELLQTDTKTVPRADVAEVCIQALLFEEAKNKAFDLGSKPEGTSTPTKDFKALFSQVTSRF</sequence>
<proteinExistence type="evidence at protein level"/>
<dbReference type="EMBL" id="AL162508">
    <property type="protein sequence ID" value="CAB82997.1"/>
    <property type="status" value="ALT_SEQ"/>
    <property type="molecule type" value="Genomic_DNA"/>
</dbReference>
<dbReference type="EMBL" id="CP002688">
    <property type="protein sequence ID" value="AED90449.1"/>
    <property type="molecule type" value="Genomic_DNA"/>
</dbReference>
<dbReference type="EMBL" id="AY142045">
    <property type="protein sequence ID" value="AAM98309.1"/>
    <property type="molecule type" value="mRNA"/>
</dbReference>
<dbReference type="EMBL" id="BT000751">
    <property type="protein sequence ID" value="AAN31891.1"/>
    <property type="molecule type" value="mRNA"/>
</dbReference>
<dbReference type="EMBL" id="AK221714">
    <property type="protein sequence ID" value="BAD95439.1"/>
    <property type="molecule type" value="mRNA"/>
</dbReference>
<dbReference type="EMBL" id="AF410336">
    <property type="protein sequence ID" value="AAK95322.1"/>
    <property type="molecule type" value="mRNA"/>
</dbReference>
<dbReference type="PIR" id="T48245">
    <property type="entry name" value="T48245"/>
</dbReference>
<dbReference type="RefSeq" id="NP_568098.1">
    <property type="nucleotide sequence ID" value="NM_120302.3"/>
</dbReference>
<dbReference type="PDB" id="1XQ6">
    <property type="method" value="X-ray"/>
    <property type="resolution" value="1.80 A"/>
    <property type="chains" value="A/B=2-253"/>
</dbReference>
<dbReference type="PDB" id="1YBM">
    <property type="method" value="X-ray"/>
    <property type="resolution" value="2.10 A"/>
    <property type="chains" value="A/B=2-253"/>
</dbReference>
<dbReference type="PDB" id="2Q46">
    <property type="method" value="X-ray"/>
    <property type="resolution" value="1.80 A"/>
    <property type="chains" value="A/B=2-253"/>
</dbReference>
<dbReference type="PDB" id="2Q4B">
    <property type="method" value="X-ray"/>
    <property type="resolution" value="2.10 A"/>
    <property type="chains" value="A/B=2-253"/>
</dbReference>
<dbReference type="PDBsum" id="1XQ6"/>
<dbReference type="PDBsum" id="1YBM"/>
<dbReference type="PDBsum" id="2Q46"/>
<dbReference type="PDBsum" id="2Q4B"/>
<dbReference type="SMR" id="Q94EG6"/>
<dbReference type="BioGRID" id="16129">
    <property type="interactions" value="1"/>
</dbReference>
<dbReference type="FunCoup" id="Q94EG6">
    <property type="interactions" value="442"/>
</dbReference>
<dbReference type="STRING" id="3702.Q94EG6"/>
<dbReference type="iPTMnet" id="Q94EG6"/>
<dbReference type="MetOSite" id="Q94EG6"/>
<dbReference type="PaxDb" id="3702-AT5G02240.1"/>
<dbReference type="ProteomicsDB" id="243013"/>
<dbReference type="DNASU" id="830851"/>
<dbReference type="EnsemblPlants" id="AT5G02240.1">
    <property type="protein sequence ID" value="AT5G02240.1"/>
    <property type="gene ID" value="AT5G02240"/>
</dbReference>
<dbReference type="GeneID" id="830851"/>
<dbReference type="Gramene" id="AT5G02240.1">
    <property type="protein sequence ID" value="AT5G02240.1"/>
    <property type="gene ID" value="AT5G02240"/>
</dbReference>
<dbReference type="KEGG" id="ath:AT5G02240"/>
<dbReference type="Araport" id="AT5G02240"/>
<dbReference type="TAIR" id="AT5G02240"/>
<dbReference type="eggNOG" id="KOG1203">
    <property type="taxonomic scope" value="Eukaryota"/>
</dbReference>
<dbReference type="HOGENOM" id="CLU_025711_0_0_1"/>
<dbReference type="InParanoid" id="Q94EG6"/>
<dbReference type="OMA" id="GANCDYS"/>
<dbReference type="PhylomeDB" id="Q94EG6"/>
<dbReference type="CD-CODE" id="4299E36E">
    <property type="entry name" value="Nucleolus"/>
</dbReference>
<dbReference type="EvolutionaryTrace" id="Q94EG6"/>
<dbReference type="PRO" id="PR:Q94EG6"/>
<dbReference type="Proteomes" id="UP000006548">
    <property type="component" value="Chromosome 5"/>
</dbReference>
<dbReference type="ExpressionAtlas" id="Q94EG6">
    <property type="expression patterns" value="baseline and differential"/>
</dbReference>
<dbReference type="GO" id="GO:0048046">
    <property type="term" value="C:apoplast"/>
    <property type="evidence" value="ECO:0007005"/>
    <property type="project" value="TAIR"/>
</dbReference>
<dbReference type="GO" id="GO:0009570">
    <property type="term" value="C:chloroplast stroma"/>
    <property type="evidence" value="ECO:0007005"/>
    <property type="project" value="TAIR"/>
</dbReference>
<dbReference type="GO" id="GO:0005829">
    <property type="term" value="C:cytosol"/>
    <property type="evidence" value="ECO:0007005"/>
    <property type="project" value="TAIR"/>
</dbReference>
<dbReference type="GO" id="GO:0000325">
    <property type="term" value="C:plant-type vacuole"/>
    <property type="evidence" value="ECO:0007005"/>
    <property type="project" value="TAIR"/>
</dbReference>
<dbReference type="GO" id="GO:0005886">
    <property type="term" value="C:plasma membrane"/>
    <property type="evidence" value="ECO:0007005"/>
    <property type="project" value="TAIR"/>
</dbReference>
<dbReference type="GO" id="GO:0016491">
    <property type="term" value="F:oxidoreductase activity"/>
    <property type="evidence" value="ECO:0007669"/>
    <property type="project" value="InterPro"/>
</dbReference>
<dbReference type="GO" id="GO:0009737">
    <property type="term" value="P:response to abscisic acid"/>
    <property type="evidence" value="ECO:0000270"/>
    <property type="project" value="TAIR"/>
</dbReference>
<dbReference type="CDD" id="cd05243">
    <property type="entry name" value="SDR_a5"/>
    <property type="match status" value="1"/>
</dbReference>
<dbReference type="FunFam" id="3.40.50.720:FF:000253">
    <property type="entry name" value="Uncharacterized protein At5g02240"/>
    <property type="match status" value="1"/>
</dbReference>
<dbReference type="Gene3D" id="3.40.50.720">
    <property type="entry name" value="NAD(P)-binding Rossmann-like Domain"/>
    <property type="match status" value="1"/>
</dbReference>
<dbReference type="InterPro" id="IPR016040">
    <property type="entry name" value="NAD(P)-bd_dom"/>
</dbReference>
<dbReference type="InterPro" id="IPR036291">
    <property type="entry name" value="NAD(P)-bd_dom_sf"/>
</dbReference>
<dbReference type="InterPro" id="IPR044163">
    <property type="entry name" value="SARED1-like"/>
</dbReference>
<dbReference type="PANTHER" id="PTHR14194:SF101">
    <property type="entry name" value="NAD(P)-BINDING DOMAIN-CONTAINING PROTEIN"/>
    <property type="match status" value="1"/>
</dbReference>
<dbReference type="PANTHER" id="PTHR14194">
    <property type="entry name" value="NITROGEN METABOLIC REGULATION PROTEIN NMR-RELATED"/>
    <property type="match status" value="1"/>
</dbReference>
<dbReference type="Pfam" id="PF13460">
    <property type="entry name" value="NAD_binding_10"/>
    <property type="match status" value="1"/>
</dbReference>
<dbReference type="SUPFAM" id="SSF51735">
    <property type="entry name" value="NAD(P)-binding Rossmann-fold domains"/>
    <property type="match status" value="1"/>
</dbReference>
<organism>
    <name type="scientific">Arabidopsis thaliana</name>
    <name type="common">Mouse-ear cress</name>
    <dbReference type="NCBI Taxonomy" id="3702"/>
    <lineage>
        <taxon>Eukaryota</taxon>
        <taxon>Viridiplantae</taxon>
        <taxon>Streptophyta</taxon>
        <taxon>Embryophyta</taxon>
        <taxon>Tracheophyta</taxon>
        <taxon>Spermatophyta</taxon>
        <taxon>Magnoliopsida</taxon>
        <taxon>eudicotyledons</taxon>
        <taxon>Gunneridae</taxon>
        <taxon>Pentapetalae</taxon>
        <taxon>rosids</taxon>
        <taxon>malvids</taxon>
        <taxon>Brassicales</taxon>
        <taxon>Brassicaceae</taxon>
        <taxon>Camelineae</taxon>
        <taxon>Arabidopsis</taxon>
    </lineage>
</organism>
<evidence type="ECO:0000305" key="1"/>
<evidence type="ECO:0000305" key="2">
    <source ref="6"/>
</evidence>
<evidence type="ECO:0007744" key="3">
    <source>
    </source>
</evidence>
<evidence type="ECO:0007829" key="4">
    <source>
        <dbReference type="PDB" id="1XQ6"/>
    </source>
</evidence>
<comment type="subunit">
    <text evidence="2">Homodimer.</text>
</comment>
<comment type="similarity">
    <text evidence="1">Belongs to the NAD(P)-dependent epimerase/dehydratase family.</text>
</comment>
<comment type="sequence caution" evidence="1">
    <conflict type="erroneous gene model prediction">
        <sequence resource="EMBL-CDS" id="CAB82997"/>
    </conflict>
</comment>
<gene>
    <name type="ordered locus">At5g02240</name>
    <name type="ORF">T7H20_290</name>
</gene>
<accession>Q94EG6</accession>
<accession>Q9LZK8</accession>